<proteinExistence type="evidence at protein level"/>
<sequence length="147" mass="15457">MASTNMASATSRFMLAAGIPSGANGGVSSRVSFLPSNRLGLKLVARAEEPTAAAPAEPAPAADEKPEAAVATKEPAKAKPPPRGPKRGTKVKILRRESYWYNGTGSVVTVDQDPNTRYPVVVRFAKVNYAGVSTNNYALDEIKEVAA</sequence>
<evidence type="ECO:0000250" key="1"/>
<evidence type="ECO:0000256" key="2">
    <source>
        <dbReference type="SAM" id="MobiDB-lite"/>
    </source>
</evidence>
<evidence type="ECO:0000269" key="3">
    <source>
    </source>
</evidence>
<evidence type="ECO:0000305" key="4"/>
<evidence type="ECO:0007829" key="5">
    <source>
        <dbReference type="PDB" id="7EW6"/>
    </source>
</evidence>
<comment type="function">
    <text evidence="1">Stabilizes the interaction between PsaC and the PSI core, assists the docking of the ferredoxin to PSI and interacts with ferredoxin-NADP oxidoreductase.</text>
</comment>
<comment type="subcellular location">
    <subcellularLocation>
        <location evidence="1">Plastid</location>
        <location evidence="1">Chloroplast thylakoid membrane</location>
        <topology evidence="1">Peripheral membrane protein</topology>
    </subcellularLocation>
</comment>
<comment type="similarity">
    <text evidence="4">Belongs to the PsaE family.</text>
</comment>
<keyword id="KW-0002">3D-structure</keyword>
<keyword id="KW-0150">Chloroplast</keyword>
<keyword id="KW-0903">Direct protein sequencing</keyword>
<keyword id="KW-0472">Membrane</keyword>
<keyword id="KW-0602">Photosynthesis</keyword>
<keyword id="KW-0603">Photosystem I</keyword>
<keyword id="KW-0934">Plastid</keyword>
<keyword id="KW-0793">Thylakoid</keyword>
<keyword id="KW-0809">Transit peptide</keyword>
<dbReference type="EMBL" id="Y00966">
    <property type="protein sequence ID" value="CAA68782.1"/>
    <property type="molecule type" value="mRNA"/>
</dbReference>
<dbReference type="PIR" id="S01326">
    <property type="entry name" value="F1BH4"/>
</dbReference>
<dbReference type="PDB" id="7EW6">
    <property type="method" value="EM"/>
    <property type="resolution" value="3.40 A"/>
    <property type="chains" value="E=1-147"/>
</dbReference>
<dbReference type="PDB" id="7EWK">
    <property type="method" value="EM"/>
    <property type="resolution" value="3.88 A"/>
    <property type="chains" value="E=79-146"/>
</dbReference>
<dbReference type="PDB" id="7F9O">
    <property type="method" value="EM"/>
    <property type="resolution" value="4.50 A"/>
    <property type="chains" value="E/i=1-147"/>
</dbReference>
<dbReference type="PDBsum" id="7EW6"/>
<dbReference type="PDBsum" id="7EWK"/>
<dbReference type="PDBsum" id="7F9O"/>
<dbReference type="EMDB" id="EMD-31348"/>
<dbReference type="EMDB" id="EMD-31350"/>
<dbReference type="EMDB" id="EMD-31498"/>
<dbReference type="SMR" id="P13194"/>
<dbReference type="ExpressionAtlas" id="P13194">
    <property type="expression patterns" value="baseline and differential"/>
</dbReference>
<dbReference type="GO" id="GO:0009535">
    <property type="term" value="C:chloroplast thylakoid membrane"/>
    <property type="evidence" value="ECO:0007669"/>
    <property type="project" value="UniProtKB-SubCell"/>
</dbReference>
<dbReference type="GO" id="GO:0009538">
    <property type="term" value="C:photosystem I reaction center"/>
    <property type="evidence" value="ECO:0007669"/>
    <property type="project" value="InterPro"/>
</dbReference>
<dbReference type="GO" id="GO:0015979">
    <property type="term" value="P:photosynthesis"/>
    <property type="evidence" value="ECO:0007669"/>
    <property type="project" value="UniProtKB-KW"/>
</dbReference>
<dbReference type="Gene3D" id="2.30.30.50">
    <property type="match status" value="1"/>
</dbReference>
<dbReference type="InterPro" id="IPR008990">
    <property type="entry name" value="Elect_transpt_acc-like_dom_sf"/>
</dbReference>
<dbReference type="InterPro" id="IPR003375">
    <property type="entry name" value="PSI_PsaE"/>
</dbReference>
<dbReference type="PANTHER" id="PTHR34549">
    <property type="entry name" value="PHOTOSYSTEM I REACTION CENTER SUBUNIT IV A, CHLOROPLASTIC-RELATED"/>
    <property type="match status" value="1"/>
</dbReference>
<dbReference type="PANTHER" id="PTHR34549:SF2">
    <property type="entry name" value="PHOTOSYSTEM I SUBUNIT IV"/>
    <property type="match status" value="1"/>
</dbReference>
<dbReference type="Pfam" id="PF02427">
    <property type="entry name" value="PSI_PsaE"/>
    <property type="match status" value="1"/>
</dbReference>
<dbReference type="SUPFAM" id="SSF50090">
    <property type="entry name" value="Electron transport accessory proteins"/>
    <property type="match status" value="1"/>
</dbReference>
<accession>P13194</accession>
<feature type="transit peptide" description="Chloroplast" evidence="3">
    <location>
        <begin position="1"/>
        <end position="46"/>
    </location>
</feature>
<feature type="chain" id="PRO_0000029381" description="Photosystem I reaction center subunit IV, chloroplastic">
    <location>
        <begin position="47"/>
        <end position="147"/>
    </location>
</feature>
<feature type="region of interest" description="Disordered" evidence="2">
    <location>
        <begin position="49"/>
        <end position="91"/>
    </location>
</feature>
<feature type="compositionally biased region" description="Low complexity" evidence="2">
    <location>
        <begin position="50"/>
        <end position="61"/>
    </location>
</feature>
<feature type="strand" evidence="5">
    <location>
        <begin position="90"/>
        <end position="93"/>
    </location>
</feature>
<feature type="strand" evidence="5">
    <location>
        <begin position="96"/>
        <end position="100"/>
    </location>
</feature>
<feature type="strand" evidence="5">
    <location>
        <begin position="104"/>
        <end position="110"/>
    </location>
</feature>
<feature type="strand" evidence="5">
    <location>
        <begin position="120"/>
        <end position="123"/>
    </location>
</feature>
<feature type="helix" evidence="5">
    <location>
        <begin position="139"/>
        <end position="141"/>
    </location>
</feature>
<protein>
    <recommendedName>
        <fullName>Photosystem I reaction center subunit IV, chloroplastic</fullName>
        <shortName>PSI-E</shortName>
    </recommendedName>
    <alternativeName>
        <fullName>Photosystem I 10.8 kDa polypeptide</fullName>
    </alternativeName>
</protein>
<reference key="1">
    <citation type="journal article" date="1988" name="FEBS Lett.">
        <title>A cDNA clone encoding a 10.8 kDa photosystem I polypeptide of barley.</title>
        <authorList>
            <person name="Okkels J.S."/>
            <person name="Jepsen L.B."/>
            <person name="Honberg L.S."/>
            <person name="Lehmbeck J."/>
            <person name="Scheller H.V."/>
            <person name="Brandt P."/>
            <person name="Hoyer-Hansen G."/>
            <person name="Stummann B."/>
            <person name="Henningsen K.W."/>
            <person name="von Wettstein D."/>
            <person name="Moeller B.L."/>
        </authorList>
    </citation>
    <scope>NUCLEOTIDE SEQUENCE [MRNA]</scope>
    <source>
        <tissue>Seedling</tissue>
    </source>
</reference>
<reference key="2">
    <citation type="journal article" date="1989" name="FEBS Lett.">
        <title>Correlation of some published amino acid sequences for photosystem I polypeptides to a 17 kDa LHCI pigment-protein and to subunits III and IV of the core complex.</title>
        <authorList>
            <person name="Anandan S."/>
            <person name="Vainstein A."/>
            <person name="Thornber J.P."/>
        </authorList>
    </citation>
    <scope>PROTEIN SEQUENCE OF 47-63</scope>
    <source>
        <strain>cv. Prato</strain>
    </source>
</reference>
<organism>
    <name type="scientific">Hordeum vulgare</name>
    <name type="common">Barley</name>
    <dbReference type="NCBI Taxonomy" id="4513"/>
    <lineage>
        <taxon>Eukaryota</taxon>
        <taxon>Viridiplantae</taxon>
        <taxon>Streptophyta</taxon>
        <taxon>Embryophyta</taxon>
        <taxon>Tracheophyta</taxon>
        <taxon>Spermatophyta</taxon>
        <taxon>Magnoliopsida</taxon>
        <taxon>Liliopsida</taxon>
        <taxon>Poales</taxon>
        <taxon>Poaceae</taxon>
        <taxon>BOP clade</taxon>
        <taxon>Pooideae</taxon>
        <taxon>Triticodae</taxon>
        <taxon>Triticeae</taxon>
        <taxon>Hordeinae</taxon>
        <taxon>Hordeum</taxon>
    </lineage>
</organism>
<gene>
    <name type="primary">PSAE</name>
</gene>
<name>PSAE_HORVU</name>